<dbReference type="EC" id="2.5.1.145" evidence="1"/>
<dbReference type="EMBL" id="AM933172">
    <property type="protein sequence ID" value="CAR34423.1"/>
    <property type="molecule type" value="Genomic_DNA"/>
</dbReference>
<dbReference type="RefSeq" id="WP_000204645.1">
    <property type="nucleotide sequence ID" value="NC_011294.1"/>
</dbReference>
<dbReference type="SMR" id="B5QWT4"/>
<dbReference type="KEGG" id="set:SEN2844"/>
<dbReference type="HOGENOM" id="CLU_013386_1_0_6"/>
<dbReference type="UniPathway" id="UPA00664"/>
<dbReference type="Proteomes" id="UP000000613">
    <property type="component" value="Chromosome"/>
</dbReference>
<dbReference type="GO" id="GO:0005886">
    <property type="term" value="C:plasma membrane"/>
    <property type="evidence" value="ECO:0007669"/>
    <property type="project" value="UniProtKB-SubCell"/>
</dbReference>
<dbReference type="GO" id="GO:0008961">
    <property type="term" value="F:phosphatidylglycerol-prolipoprotein diacylglyceryl transferase activity"/>
    <property type="evidence" value="ECO:0007669"/>
    <property type="project" value="UniProtKB-UniRule"/>
</dbReference>
<dbReference type="GO" id="GO:0042158">
    <property type="term" value="P:lipoprotein biosynthetic process"/>
    <property type="evidence" value="ECO:0007669"/>
    <property type="project" value="UniProtKB-UniRule"/>
</dbReference>
<dbReference type="HAMAP" id="MF_01147">
    <property type="entry name" value="Lgt"/>
    <property type="match status" value="1"/>
</dbReference>
<dbReference type="InterPro" id="IPR001640">
    <property type="entry name" value="Lgt"/>
</dbReference>
<dbReference type="NCBIfam" id="TIGR00544">
    <property type="entry name" value="lgt"/>
    <property type="match status" value="1"/>
</dbReference>
<dbReference type="PANTHER" id="PTHR30589:SF0">
    <property type="entry name" value="PHOSPHATIDYLGLYCEROL--PROLIPOPROTEIN DIACYLGLYCERYL TRANSFERASE"/>
    <property type="match status" value="1"/>
</dbReference>
<dbReference type="PANTHER" id="PTHR30589">
    <property type="entry name" value="PROLIPOPROTEIN DIACYLGLYCERYL TRANSFERASE"/>
    <property type="match status" value="1"/>
</dbReference>
<dbReference type="Pfam" id="PF01790">
    <property type="entry name" value="LGT"/>
    <property type="match status" value="1"/>
</dbReference>
<dbReference type="PROSITE" id="PS01311">
    <property type="entry name" value="LGT"/>
    <property type="match status" value="1"/>
</dbReference>
<accession>B5QWT4</accession>
<keyword id="KW-0997">Cell inner membrane</keyword>
<keyword id="KW-1003">Cell membrane</keyword>
<keyword id="KW-0472">Membrane</keyword>
<keyword id="KW-0808">Transferase</keyword>
<keyword id="KW-0812">Transmembrane</keyword>
<keyword id="KW-1133">Transmembrane helix</keyword>
<proteinExistence type="inferred from homology"/>
<comment type="function">
    <text evidence="1">Catalyzes the transfer of the diacylglyceryl group from phosphatidylglycerol to the sulfhydryl group of the N-terminal cysteine of a prolipoprotein, the first step in the formation of mature lipoproteins.</text>
</comment>
<comment type="catalytic activity">
    <reaction evidence="1">
        <text>L-cysteinyl-[prolipoprotein] + a 1,2-diacyl-sn-glycero-3-phospho-(1'-sn-glycerol) = an S-1,2-diacyl-sn-glyceryl-L-cysteinyl-[prolipoprotein] + sn-glycerol 1-phosphate + H(+)</text>
        <dbReference type="Rhea" id="RHEA:56712"/>
        <dbReference type="Rhea" id="RHEA-COMP:14679"/>
        <dbReference type="Rhea" id="RHEA-COMP:14680"/>
        <dbReference type="ChEBI" id="CHEBI:15378"/>
        <dbReference type="ChEBI" id="CHEBI:29950"/>
        <dbReference type="ChEBI" id="CHEBI:57685"/>
        <dbReference type="ChEBI" id="CHEBI:64716"/>
        <dbReference type="ChEBI" id="CHEBI:140658"/>
        <dbReference type="EC" id="2.5.1.145"/>
    </reaction>
</comment>
<comment type="pathway">
    <text evidence="1">Protein modification; lipoprotein biosynthesis (diacylglyceryl transfer).</text>
</comment>
<comment type="subcellular location">
    <subcellularLocation>
        <location evidence="1">Cell inner membrane</location>
        <topology evidence="1">Multi-pass membrane protein</topology>
    </subcellularLocation>
</comment>
<comment type="similarity">
    <text evidence="1">Belongs to the Lgt family.</text>
</comment>
<reference key="1">
    <citation type="journal article" date="2008" name="Genome Res.">
        <title>Comparative genome analysis of Salmonella enteritidis PT4 and Salmonella gallinarum 287/91 provides insights into evolutionary and host adaptation pathways.</title>
        <authorList>
            <person name="Thomson N.R."/>
            <person name="Clayton D.J."/>
            <person name="Windhorst D."/>
            <person name="Vernikos G."/>
            <person name="Davidson S."/>
            <person name="Churcher C."/>
            <person name="Quail M.A."/>
            <person name="Stevens M."/>
            <person name="Jones M.A."/>
            <person name="Watson M."/>
            <person name="Barron A."/>
            <person name="Layton A."/>
            <person name="Pickard D."/>
            <person name="Kingsley R.A."/>
            <person name="Bignell A."/>
            <person name="Clark L."/>
            <person name="Harris B."/>
            <person name="Ormond D."/>
            <person name="Abdellah Z."/>
            <person name="Brooks K."/>
            <person name="Cherevach I."/>
            <person name="Chillingworth T."/>
            <person name="Woodward J."/>
            <person name="Norberczak H."/>
            <person name="Lord A."/>
            <person name="Arrowsmith C."/>
            <person name="Jagels K."/>
            <person name="Moule S."/>
            <person name="Mungall K."/>
            <person name="Saunders M."/>
            <person name="Whitehead S."/>
            <person name="Chabalgoity J.A."/>
            <person name="Maskell D."/>
            <person name="Humphreys T."/>
            <person name="Roberts M."/>
            <person name="Barrow P.A."/>
            <person name="Dougan G."/>
            <person name="Parkhill J."/>
        </authorList>
    </citation>
    <scope>NUCLEOTIDE SEQUENCE [LARGE SCALE GENOMIC DNA]</scope>
    <source>
        <strain>P125109</strain>
    </source>
</reference>
<protein>
    <recommendedName>
        <fullName evidence="1">Phosphatidylglycerol--prolipoprotein diacylglyceryl transferase</fullName>
        <ecNumber evidence="1">2.5.1.145</ecNumber>
    </recommendedName>
</protein>
<gene>
    <name evidence="1" type="primary">lgt</name>
    <name type="ordered locus">SEN2844</name>
</gene>
<evidence type="ECO:0000255" key="1">
    <source>
        <dbReference type="HAMAP-Rule" id="MF_01147"/>
    </source>
</evidence>
<feature type="chain" id="PRO_1000137453" description="Phosphatidylglycerol--prolipoprotein diacylglyceryl transferase">
    <location>
        <begin position="1"/>
        <end position="291"/>
    </location>
</feature>
<feature type="transmembrane region" description="Helical" evidence="1">
    <location>
        <begin position="21"/>
        <end position="41"/>
    </location>
</feature>
<feature type="transmembrane region" description="Helical" evidence="1">
    <location>
        <begin position="60"/>
        <end position="80"/>
    </location>
</feature>
<feature type="transmembrane region" description="Helical" evidence="1">
    <location>
        <begin position="96"/>
        <end position="116"/>
    </location>
</feature>
<feature type="transmembrane region" description="Helical" evidence="1">
    <location>
        <begin position="130"/>
        <end position="150"/>
    </location>
</feature>
<feature type="transmembrane region" description="Helical" evidence="1">
    <location>
        <begin position="198"/>
        <end position="218"/>
    </location>
</feature>
<feature type="transmembrane region" description="Helical" evidence="1">
    <location>
        <begin position="225"/>
        <end position="245"/>
    </location>
</feature>
<feature type="transmembrane region" description="Helical" evidence="1">
    <location>
        <begin position="260"/>
        <end position="280"/>
    </location>
</feature>
<feature type="binding site" evidence="1">
    <location>
        <position position="143"/>
    </location>
    <ligand>
        <name>a 1,2-diacyl-sn-glycero-3-phospho-(1'-sn-glycerol)</name>
        <dbReference type="ChEBI" id="CHEBI:64716"/>
    </ligand>
</feature>
<name>LGT_SALEP</name>
<organism>
    <name type="scientific">Salmonella enteritidis PT4 (strain P125109)</name>
    <dbReference type="NCBI Taxonomy" id="550537"/>
    <lineage>
        <taxon>Bacteria</taxon>
        <taxon>Pseudomonadati</taxon>
        <taxon>Pseudomonadota</taxon>
        <taxon>Gammaproteobacteria</taxon>
        <taxon>Enterobacterales</taxon>
        <taxon>Enterobacteriaceae</taxon>
        <taxon>Salmonella</taxon>
    </lineage>
</organism>
<sequence length="291" mass="33075">MTSSYLHFPDFDPVIFSIGPVALHWYGLMYLVGFVFAMWLAVRRANRPGSGWTKNEVENLLYAGFLGVFLGGRIGYVLFYNFPLFLDNPLYLFRVWDGGMSFHGGLIGVILVMIIFARRTKRSFFQVSDFIAPLIPFGLGAGRLGNFINGELWGRVDPDFRFAMLFPGSRAEDIALLPSHPQWQPIFDTYGVLPRHPSQLYELALEGVVLFIILNLFIRKPRPMGAVSGLFLIGYGAFRIIVEFFRQPDAQFTGAWVQYISMGQILSIPMIIAGAIMMVWAYRRRPQQHVS</sequence>